<name>RS20_RHOJR</name>
<keyword id="KW-0687">Ribonucleoprotein</keyword>
<keyword id="KW-0689">Ribosomal protein</keyword>
<keyword id="KW-0694">RNA-binding</keyword>
<keyword id="KW-0699">rRNA-binding</keyword>
<feature type="chain" id="PRO_0000260135" description="Small ribosomal subunit protein bS20">
    <location>
        <begin position="1"/>
        <end position="86"/>
    </location>
</feature>
<dbReference type="EMBL" id="CP000431">
    <property type="protein sequence ID" value="ABG93109.1"/>
    <property type="molecule type" value="Genomic_DNA"/>
</dbReference>
<dbReference type="RefSeq" id="WP_005248015.1">
    <property type="nucleotide sequence ID" value="NC_008268.1"/>
</dbReference>
<dbReference type="SMR" id="Q0SH77"/>
<dbReference type="GeneID" id="69892944"/>
<dbReference type="KEGG" id="rha:RHA1_ro01285"/>
<dbReference type="eggNOG" id="COG0268">
    <property type="taxonomic scope" value="Bacteria"/>
</dbReference>
<dbReference type="HOGENOM" id="CLU_160655_0_1_11"/>
<dbReference type="OrthoDB" id="9807974at2"/>
<dbReference type="Proteomes" id="UP000008710">
    <property type="component" value="Chromosome"/>
</dbReference>
<dbReference type="GO" id="GO:0005829">
    <property type="term" value="C:cytosol"/>
    <property type="evidence" value="ECO:0007669"/>
    <property type="project" value="TreeGrafter"/>
</dbReference>
<dbReference type="GO" id="GO:0015935">
    <property type="term" value="C:small ribosomal subunit"/>
    <property type="evidence" value="ECO:0007669"/>
    <property type="project" value="TreeGrafter"/>
</dbReference>
<dbReference type="GO" id="GO:0070181">
    <property type="term" value="F:small ribosomal subunit rRNA binding"/>
    <property type="evidence" value="ECO:0007669"/>
    <property type="project" value="TreeGrafter"/>
</dbReference>
<dbReference type="GO" id="GO:0003735">
    <property type="term" value="F:structural constituent of ribosome"/>
    <property type="evidence" value="ECO:0007669"/>
    <property type="project" value="InterPro"/>
</dbReference>
<dbReference type="GO" id="GO:0006412">
    <property type="term" value="P:translation"/>
    <property type="evidence" value="ECO:0007669"/>
    <property type="project" value="UniProtKB-UniRule"/>
</dbReference>
<dbReference type="FunFam" id="1.20.58.110:FF:000001">
    <property type="entry name" value="30S ribosomal protein S20"/>
    <property type="match status" value="1"/>
</dbReference>
<dbReference type="Gene3D" id="1.20.58.110">
    <property type="entry name" value="Ribosomal protein S20"/>
    <property type="match status" value="1"/>
</dbReference>
<dbReference type="HAMAP" id="MF_00500">
    <property type="entry name" value="Ribosomal_bS20"/>
    <property type="match status" value="1"/>
</dbReference>
<dbReference type="InterPro" id="IPR002583">
    <property type="entry name" value="Ribosomal_bS20"/>
</dbReference>
<dbReference type="InterPro" id="IPR036510">
    <property type="entry name" value="Ribosomal_bS20_sf"/>
</dbReference>
<dbReference type="NCBIfam" id="TIGR00029">
    <property type="entry name" value="S20"/>
    <property type="match status" value="1"/>
</dbReference>
<dbReference type="PANTHER" id="PTHR33398">
    <property type="entry name" value="30S RIBOSOMAL PROTEIN S20"/>
    <property type="match status" value="1"/>
</dbReference>
<dbReference type="PANTHER" id="PTHR33398:SF1">
    <property type="entry name" value="SMALL RIBOSOMAL SUBUNIT PROTEIN BS20C"/>
    <property type="match status" value="1"/>
</dbReference>
<dbReference type="Pfam" id="PF01649">
    <property type="entry name" value="Ribosomal_S20p"/>
    <property type="match status" value="1"/>
</dbReference>
<dbReference type="SUPFAM" id="SSF46992">
    <property type="entry name" value="Ribosomal protein S20"/>
    <property type="match status" value="1"/>
</dbReference>
<sequence>MANIKSQVKRIRTNEAARLRNQSVKSSLRTAIRSFREAAAAGDKDKANELLVATSRKLDKAASKGVIHANQAANKKSALAQAINKI</sequence>
<protein>
    <recommendedName>
        <fullName evidence="1">Small ribosomal subunit protein bS20</fullName>
    </recommendedName>
    <alternativeName>
        <fullName evidence="2">30S ribosomal protein S20</fullName>
    </alternativeName>
</protein>
<organism>
    <name type="scientific">Rhodococcus jostii (strain RHA1)</name>
    <dbReference type="NCBI Taxonomy" id="101510"/>
    <lineage>
        <taxon>Bacteria</taxon>
        <taxon>Bacillati</taxon>
        <taxon>Actinomycetota</taxon>
        <taxon>Actinomycetes</taxon>
        <taxon>Mycobacteriales</taxon>
        <taxon>Nocardiaceae</taxon>
        <taxon>Rhodococcus</taxon>
    </lineage>
</organism>
<accession>Q0SH77</accession>
<proteinExistence type="inferred from homology"/>
<gene>
    <name evidence="1" type="primary">rpsT</name>
    <name type="ordered locus">RHA1_ro01285</name>
</gene>
<comment type="function">
    <text evidence="1">Binds directly to 16S ribosomal RNA.</text>
</comment>
<comment type="similarity">
    <text evidence="1">Belongs to the bacterial ribosomal protein bS20 family.</text>
</comment>
<evidence type="ECO:0000255" key="1">
    <source>
        <dbReference type="HAMAP-Rule" id="MF_00500"/>
    </source>
</evidence>
<evidence type="ECO:0000305" key="2"/>
<reference key="1">
    <citation type="journal article" date="2006" name="Proc. Natl. Acad. Sci. U.S.A.">
        <title>The complete genome of Rhodococcus sp. RHA1 provides insights into a catabolic powerhouse.</title>
        <authorList>
            <person name="McLeod M.P."/>
            <person name="Warren R.L."/>
            <person name="Hsiao W.W.L."/>
            <person name="Araki N."/>
            <person name="Myhre M."/>
            <person name="Fernandes C."/>
            <person name="Miyazawa D."/>
            <person name="Wong W."/>
            <person name="Lillquist A.L."/>
            <person name="Wang D."/>
            <person name="Dosanjh M."/>
            <person name="Hara H."/>
            <person name="Petrescu A."/>
            <person name="Morin R.D."/>
            <person name="Yang G."/>
            <person name="Stott J.M."/>
            <person name="Schein J.E."/>
            <person name="Shin H."/>
            <person name="Smailus D."/>
            <person name="Siddiqui A.S."/>
            <person name="Marra M.A."/>
            <person name="Jones S.J.M."/>
            <person name="Holt R."/>
            <person name="Brinkman F.S.L."/>
            <person name="Miyauchi K."/>
            <person name="Fukuda M."/>
            <person name="Davies J.E."/>
            <person name="Mohn W.W."/>
            <person name="Eltis L.D."/>
        </authorList>
    </citation>
    <scope>NUCLEOTIDE SEQUENCE [LARGE SCALE GENOMIC DNA]</scope>
    <source>
        <strain>RHA1</strain>
    </source>
</reference>